<name>ISPD_THEM4</name>
<evidence type="ECO:0000255" key="1">
    <source>
        <dbReference type="HAMAP-Rule" id="MF_00108"/>
    </source>
</evidence>
<dbReference type="EC" id="2.7.7.60" evidence="1"/>
<dbReference type="EMBL" id="CP000716">
    <property type="protein sequence ID" value="ABR31757.1"/>
    <property type="molecule type" value="Genomic_DNA"/>
</dbReference>
<dbReference type="SMR" id="A6LPA6"/>
<dbReference type="STRING" id="391009.Tmel_1925"/>
<dbReference type="KEGG" id="tme:Tmel_1925"/>
<dbReference type="eggNOG" id="COG1211">
    <property type="taxonomic scope" value="Bacteria"/>
</dbReference>
<dbReference type="HOGENOM" id="CLU_061281_2_3_0"/>
<dbReference type="OrthoDB" id="9806837at2"/>
<dbReference type="UniPathway" id="UPA00056">
    <property type="reaction ID" value="UER00093"/>
</dbReference>
<dbReference type="Proteomes" id="UP000001110">
    <property type="component" value="Chromosome"/>
</dbReference>
<dbReference type="GO" id="GO:0050518">
    <property type="term" value="F:2-C-methyl-D-erythritol 4-phosphate cytidylyltransferase activity"/>
    <property type="evidence" value="ECO:0007669"/>
    <property type="project" value="UniProtKB-UniRule"/>
</dbReference>
<dbReference type="GO" id="GO:0019288">
    <property type="term" value="P:isopentenyl diphosphate biosynthetic process, methylerythritol 4-phosphate pathway"/>
    <property type="evidence" value="ECO:0007669"/>
    <property type="project" value="UniProtKB-UniRule"/>
</dbReference>
<dbReference type="CDD" id="cd02516">
    <property type="entry name" value="CDP-ME_synthetase"/>
    <property type="match status" value="1"/>
</dbReference>
<dbReference type="FunFam" id="3.90.550.10:FF:000003">
    <property type="entry name" value="2-C-methyl-D-erythritol 4-phosphate cytidylyltransferase"/>
    <property type="match status" value="1"/>
</dbReference>
<dbReference type="Gene3D" id="3.90.550.10">
    <property type="entry name" value="Spore Coat Polysaccharide Biosynthesis Protein SpsA, Chain A"/>
    <property type="match status" value="1"/>
</dbReference>
<dbReference type="HAMAP" id="MF_00108">
    <property type="entry name" value="IspD"/>
    <property type="match status" value="1"/>
</dbReference>
<dbReference type="InterPro" id="IPR001228">
    <property type="entry name" value="IspD"/>
</dbReference>
<dbReference type="InterPro" id="IPR034683">
    <property type="entry name" value="IspD/TarI"/>
</dbReference>
<dbReference type="InterPro" id="IPR050088">
    <property type="entry name" value="IspD/TarI_cytidylyltransf_bact"/>
</dbReference>
<dbReference type="InterPro" id="IPR018294">
    <property type="entry name" value="ISPD_synthase_CS"/>
</dbReference>
<dbReference type="InterPro" id="IPR029044">
    <property type="entry name" value="Nucleotide-diphossugar_trans"/>
</dbReference>
<dbReference type="NCBIfam" id="TIGR00453">
    <property type="entry name" value="ispD"/>
    <property type="match status" value="1"/>
</dbReference>
<dbReference type="NCBIfam" id="NF001183">
    <property type="entry name" value="PRK00155.1-3"/>
    <property type="match status" value="1"/>
</dbReference>
<dbReference type="PANTHER" id="PTHR32125">
    <property type="entry name" value="2-C-METHYL-D-ERYTHRITOL 4-PHOSPHATE CYTIDYLYLTRANSFERASE, CHLOROPLASTIC"/>
    <property type="match status" value="1"/>
</dbReference>
<dbReference type="PANTHER" id="PTHR32125:SF4">
    <property type="entry name" value="2-C-METHYL-D-ERYTHRITOL 4-PHOSPHATE CYTIDYLYLTRANSFERASE, CHLOROPLASTIC"/>
    <property type="match status" value="1"/>
</dbReference>
<dbReference type="Pfam" id="PF01128">
    <property type="entry name" value="IspD"/>
    <property type="match status" value="1"/>
</dbReference>
<dbReference type="SUPFAM" id="SSF53448">
    <property type="entry name" value="Nucleotide-diphospho-sugar transferases"/>
    <property type="match status" value="1"/>
</dbReference>
<dbReference type="PROSITE" id="PS01295">
    <property type="entry name" value="ISPD"/>
    <property type="match status" value="1"/>
</dbReference>
<feature type="chain" id="PRO_1000022955" description="2-C-methyl-D-erythritol 4-phosphate cytidylyltransferase">
    <location>
        <begin position="1"/>
        <end position="227"/>
    </location>
</feature>
<feature type="site" description="Transition state stabilizer" evidence="1">
    <location>
        <position position="14"/>
    </location>
</feature>
<feature type="site" description="Transition state stabilizer" evidence="1">
    <location>
        <position position="21"/>
    </location>
</feature>
<feature type="site" description="Positions MEP for the nucleophilic attack" evidence="1">
    <location>
        <position position="153"/>
    </location>
</feature>
<feature type="site" description="Positions MEP for the nucleophilic attack" evidence="1">
    <location>
        <position position="208"/>
    </location>
</feature>
<protein>
    <recommendedName>
        <fullName evidence="1">2-C-methyl-D-erythritol 4-phosphate cytidylyltransferase</fullName>
        <ecNumber evidence="1">2.7.7.60</ecNumber>
    </recommendedName>
    <alternativeName>
        <fullName evidence="1">4-diphosphocytidyl-2C-methyl-D-erythritol synthase</fullName>
    </alternativeName>
    <alternativeName>
        <fullName evidence="1">MEP cytidylyltransferase</fullName>
        <shortName evidence="1">MCT</shortName>
    </alternativeName>
</protein>
<organism>
    <name type="scientific">Thermosipho melanesiensis (strain DSM 12029 / CIP 104789 / BI429)</name>
    <dbReference type="NCBI Taxonomy" id="391009"/>
    <lineage>
        <taxon>Bacteria</taxon>
        <taxon>Thermotogati</taxon>
        <taxon>Thermotogota</taxon>
        <taxon>Thermotogae</taxon>
        <taxon>Thermotogales</taxon>
        <taxon>Fervidobacteriaceae</taxon>
        <taxon>Thermosipho</taxon>
    </lineage>
</organism>
<keyword id="KW-0414">Isoprene biosynthesis</keyword>
<keyword id="KW-0548">Nucleotidyltransferase</keyword>
<keyword id="KW-0808">Transferase</keyword>
<gene>
    <name evidence="1" type="primary">ispD</name>
    <name type="ordered locus">Tmel_1925</name>
</gene>
<comment type="function">
    <text evidence="1">Catalyzes the formation of 4-diphosphocytidyl-2-C-methyl-D-erythritol from CTP and 2-C-methyl-D-erythritol 4-phosphate (MEP).</text>
</comment>
<comment type="catalytic activity">
    <reaction evidence="1">
        <text>2-C-methyl-D-erythritol 4-phosphate + CTP + H(+) = 4-CDP-2-C-methyl-D-erythritol + diphosphate</text>
        <dbReference type="Rhea" id="RHEA:13429"/>
        <dbReference type="ChEBI" id="CHEBI:15378"/>
        <dbReference type="ChEBI" id="CHEBI:33019"/>
        <dbReference type="ChEBI" id="CHEBI:37563"/>
        <dbReference type="ChEBI" id="CHEBI:57823"/>
        <dbReference type="ChEBI" id="CHEBI:58262"/>
        <dbReference type="EC" id="2.7.7.60"/>
    </reaction>
</comment>
<comment type="pathway">
    <text evidence="1">Isoprenoid biosynthesis; isopentenyl diphosphate biosynthesis via DXP pathway; isopentenyl diphosphate from 1-deoxy-D-xylulose 5-phosphate: step 2/6.</text>
</comment>
<comment type="similarity">
    <text evidence="1">Belongs to the IspD/TarI cytidylyltransferase family. IspD subfamily.</text>
</comment>
<accession>A6LPA6</accession>
<reference key="1">
    <citation type="submission" date="2007-05" db="EMBL/GenBank/DDBJ databases">
        <title>Complete sequence of Thermosipho melanesiensis BI429.</title>
        <authorList>
            <consortium name="US DOE Joint Genome Institute"/>
            <person name="Copeland A."/>
            <person name="Lucas S."/>
            <person name="Lapidus A."/>
            <person name="Barry K."/>
            <person name="Glavina del Rio T."/>
            <person name="Dalin E."/>
            <person name="Tice H."/>
            <person name="Pitluck S."/>
            <person name="Chertkov O."/>
            <person name="Brettin T."/>
            <person name="Bruce D."/>
            <person name="Detter J.C."/>
            <person name="Han C."/>
            <person name="Schmutz J."/>
            <person name="Larimer F."/>
            <person name="Land M."/>
            <person name="Hauser L."/>
            <person name="Kyrpides N."/>
            <person name="Mikhailova N."/>
            <person name="Nelson K."/>
            <person name="Gogarten J.P."/>
            <person name="Noll K."/>
            <person name="Richardson P."/>
        </authorList>
    </citation>
    <scope>NUCLEOTIDE SEQUENCE [LARGE SCALE GENOMIC DNA]</scope>
    <source>
        <strain>DSM 12029 / CIP 104789 / BI429</strain>
    </source>
</reference>
<sequence>MNVAVILFGGKGERFSKDYPKQFVKFHGKTLMEHTVEKFLENFIHLIIIVVNGEYLEESKKILKKYKRKNIYVILGGKTREFSTLNAVKYLKDLISEDDNVIIHDGARPFVSKEVILRNIDFVNKYGAVVTAVPVENTIAFVENKIVKEIPPRRYLFTLQTPQTFKYSILYKSFRLIKDLEKFTDDSSVVLAAGYNVHVVYGEKTNIKITTKEDLYLIGVEKIEGNI</sequence>
<proteinExistence type="inferred from homology"/>